<keyword id="KW-0378">Hydrolase</keyword>
<keyword id="KW-0511">Multifunctional enzyme</keyword>
<keyword id="KW-0658">Purine biosynthesis</keyword>
<keyword id="KW-0808">Transferase</keyword>
<organism>
    <name type="scientific">Bacillus cereus (strain G9842)</name>
    <dbReference type="NCBI Taxonomy" id="405531"/>
    <lineage>
        <taxon>Bacteria</taxon>
        <taxon>Bacillati</taxon>
        <taxon>Bacillota</taxon>
        <taxon>Bacilli</taxon>
        <taxon>Bacillales</taxon>
        <taxon>Bacillaceae</taxon>
        <taxon>Bacillus</taxon>
        <taxon>Bacillus cereus group</taxon>
    </lineage>
</organism>
<gene>
    <name evidence="1" type="primary">purH</name>
    <name type="ordered locus">BCG9842_B4976</name>
</gene>
<feature type="chain" id="PRO_1000117865" description="Bifunctional purine biosynthesis protein PurH">
    <location>
        <begin position="1"/>
        <end position="511"/>
    </location>
</feature>
<feature type="domain" description="MGS-like" evidence="2">
    <location>
        <begin position="1"/>
        <end position="145"/>
    </location>
</feature>
<name>PUR9_BACC2</name>
<proteinExistence type="inferred from homology"/>
<dbReference type="EC" id="2.1.2.3" evidence="1"/>
<dbReference type="EC" id="3.5.4.10" evidence="1"/>
<dbReference type="EMBL" id="CP001186">
    <property type="protein sequence ID" value="ACK96864.1"/>
    <property type="molecule type" value="Genomic_DNA"/>
</dbReference>
<dbReference type="RefSeq" id="WP_000745398.1">
    <property type="nucleotide sequence ID" value="NC_011772.1"/>
</dbReference>
<dbReference type="SMR" id="B7IUV7"/>
<dbReference type="KEGG" id="bcg:BCG9842_B4976"/>
<dbReference type="HOGENOM" id="CLU_016316_5_2_9"/>
<dbReference type="UniPathway" id="UPA00074">
    <property type="reaction ID" value="UER00133"/>
</dbReference>
<dbReference type="UniPathway" id="UPA00074">
    <property type="reaction ID" value="UER00135"/>
</dbReference>
<dbReference type="Proteomes" id="UP000006744">
    <property type="component" value="Chromosome"/>
</dbReference>
<dbReference type="GO" id="GO:0005829">
    <property type="term" value="C:cytosol"/>
    <property type="evidence" value="ECO:0007669"/>
    <property type="project" value="TreeGrafter"/>
</dbReference>
<dbReference type="GO" id="GO:0003937">
    <property type="term" value="F:IMP cyclohydrolase activity"/>
    <property type="evidence" value="ECO:0007669"/>
    <property type="project" value="UniProtKB-UniRule"/>
</dbReference>
<dbReference type="GO" id="GO:0004643">
    <property type="term" value="F:phosphoribosylaminoimidazolecarboxamide formyltransferase activity"/>
    <property type="evidence" value="ECO:0007669"/>
    <property type="project" value="UniProtKB-UniRule"/>
</dbReference>
<dbReference type="GO" id="GO:0006189">
    <property type="term" value="P:'de novo' IMP biosynthetic process"/>
    <property type="evidence" value="ECO:0007669"/>
    <property type="project" value="UniProtKB-UniRule"/>
</dbReference>
<dbReference type="CDD" id="cd01421">
    <property type="entry name" value="IMPCH"/>
    <property type="match status" value="1"/>
</dbReference>
<dbReference type="FunFam" id="3.40.140.20:FF:000001">
    <property type="entry name" value="Bifunctional purine biosynthesis protein PurH"/>
    <property type="match status" value="1"/>
</dbReference>
<dbReference type="FunFam" id="3.40.140.20:FF:000002">
    <property type="entry name" value="Bifunctional purine biosynthesis protein PurH"/>
    <property type="match status" value="1"/>
</dbReference>
<dbReference type="FunFam" id="3.40.50.1380:FF:000001">
    <property type="entry name" value="Bifunctional purine biosynthesis protein PurH"/>
    <property type="match status" value="1"/>
</dbReference>
<dbReference type="Gene3D" id="3.40.140.20">
    <property type="match status" value="2"/>
</dbReference>
<dbReference type="Gene3D" id="3.40.50.1380">
    <property type="entry name" value="Methylglyoxal synthase-like domain"/>
    <property type="match status" value="1"/>
</dbReference>
<dbReference type="HAMAP" id="MF_00139">
    <property type="entry name" value="PurH"/>
    <property type="match status" value="1"/>
</dbReference>
<dbReference type="InterPro" id="IPR024051">
    <property type="entry name" value="AICAR_Tfase_dup_dom_sf"/>
</dbReference>
<dbReference type="InterPro" id="IPR016193">
    <property type="entry name" value="Cytidine_deaminase-like"/>
</dbReference>
<dbReference type="InterPro" id="IPR011607">
    <property type="entry name" value="MGS-like_dom"/>
</dbReference>
<dbReference type="InterPro" id="IPR036914">
    <property type="entry name" value="MGS-like_dom_sf"/>
</dbReference>
<dbReference type="InterPro" id="IPR002695">
    <property type="entry name" value="PurH-like"/>
</dbReference>
<dbReference type="NCBIfam" id="NF002049">
    <property type="entry name" value="PRK00881.1"/>
    <property type="match status" value="1"/>
</dbReference>
<dbReference type="NCBIfam" id="TIGR00355">
    <property type="entry name" value="purH"/>
    <property type="match status" value="1"/>
</dbReference>
<dbReference type="PANTHER" id="PTHR11692:SF0">
    <property type="entry name" value="BIFUNCTIONAL PURINE BIOSYNTHESIS PROTEIN ATIC"/>
    <property type="match status" value="1"/>
</dbReference>
<dbReference type="PANTHER" id="PTHR11692">
    <property type="entry name" value="BIFUNCTIONAL PURINE BIOSYNTHESIS PROTEIN PURH"/>
    <property type="match status" value="1"/>
</dbReference>
<dbReference type="Pfam" id="PF01808">
    <property type="entry name" value="AICARFT_IMPCHas"/>
    <property type="match status" value="1"/>
</dbReference>
<dbReference type="Pfam" id="PF02142">
    <property type="entry name" value="MGS"/>
    <property type="match status" value="1"/>
</dbReference>
<dbReference type="PIRSF" id="PIRSF000414">
    <property type="entry name" value="AICARFT_IMPCHas"/>
    <property type="match status" value="1"/>
</dbReference>
<dbReference type="SMART" id="SM00798">
    <property type="entry name" value="AICARFT_IMPCHas"/>
    <property type="match status" value="1"/>
</dbReference>
<dbReference type="SMART" id="SM00851">
    <property type="entry name" value="MGS"/>
    <property type="match status" value="1"/>
</dbReference>
<dbReference type="SUPFAM" id="SSF53927">
    <property type="entry name" value="Cytidine deaminase-like"/>
    <property type="match status" value="1"/>
</dbReference>
<dbReference type="SUPFAM" id="SSF52335">
    <property type="entry name" value="Methylglyoxal synthase-like"/>
    <property type="match status" value="1"/>
</dbReference>
<dbReference type="PROSITE" id="PS51855">
    <property type="entry name" value="MGS"/>
    <property type="match status" value="1"/>
</dbReference>
<accession>B7IUV7</accession>
<evidence type="ECO:0000255" key="1">
    <source>
        <dbReference type="HAMAP-Rule" id="MF_00139"/>
    </source>
</evidence>
<evidence type="ECO:0000255" key="2">
    <source>
        <dbReference type="PROSITE-ProRule" id="PRU01202"/>
    </source>
</evidence>
<comment type="catalytic activity">
    <reaction evidence="1">
        <text>(6R)-10-formyltetrahydrofolate + 5-amino-1-(5-phospho-beta-D-ribosyl)imidazole-4-carboxamide = 5-formamido-1-(5-phospho-D-ribosyl)imidazole-4-carboxamide + (6S)-5,6,7,8-tetrahydrofolate</text>
        <dbReference type="Rhea" id="RHEA:22192"/>
        <dbReference type="ChEBI" id="CHEBI:57453"/>
        <dbReference type="ChEBI" id="CHEBI:58467"/>
        <dbReference type="ChEBI" id="CHEBI:58475"/>
        <dbReference type="ChEBI" id="CHEBI:195366"/>
        <dbReference type="EC" id="2.1.2.3"/>
    </reaction>
</comment>
<comment type="catalytic activity">
    <reaction evidence="1">
        <text>IMP + H2O = 5-formamido-1-(5-phospho-D-ribosyl)imidazole-4-carboxamide</text>
        <dbReference type="Rhea" id="RHEA:18445"/>
        <dbReference type="ChEBI" id="CHEBI:15377"/>
        <dbReference type="ChEBI" id="CHEBI:58053"/>
        <dbReference type="ChEBI" id="CHEBI:58467"/>
        <dbReference type="EC" id="3.5.4.10"/>
    </reaction>
</comment>
<comment type="pathway">
    <text evidence="1">Purine metabolism; IMP biosynthesis via de novo pathway; 5-formamido-1-(5-phospho-D-ribosyl)imidazole-4-carboxamide from 5-amino-1-(5-phospho-D-ribosyl)imidazole-4-carboxamide (10-formyl THF route): step 1/1.</text>
</comment>
<comment type="pathway">
    <text evidence="1">Purine metabolism; IMP biosynthesis via de novo pathway; IMP from 5-formamido-1-(5-phospho-D-ribosyl)imidazole-4-carboxamide: step 1/1.</text>
</comment>
<comment type="domain">
    <text evidence="1">The IMP cyclohydrolase activity resides in the N-terminal region.</text>
</comment>
<comment type="similarity">
    <text evidence="1">Belongs to the PurH family.</text>
</comment>
<reference key="1">
    <citation type="submission" date="2008-10" db="EMBL/GenBank/DDBJ databases">
        <title>Genome sequence of Bacillus cereus G9842.</title>
        <authorList>
            <person name="Dodson R.J."/>
            <person name="Durkin A.S."/>
            <person name="Rosovitz M.J."/>
            <person name="Rasko D.A."/>
            <person name="Hoffmaster A."/>
            <person name="Ravel J."/>
            <person name="Sutton G."/>
        </authorList>
    </citation>
    <scope>NUCLEOTIDE SEQUENCE [LARGE SCALE GENOMIC DNA]</scope>
    <source>
        <strain>G9842</strain>
    </source>
</reference>
<sequence length="511" mass="55541">MKKRALVSVSDKTGVVEFVKGLLEQGIEVISTGGTKKLLEANGLQVIGISEVTGFPEIMDGRVKTLHPNIHGGLLAVRDNETHVIQMNELGIQPIDFVVVNLYPFKETIAKPDVTFADAIENIDIGGPTMIRSAAKNHQFVSVIVDPVDYDVVLAELKENGEVMDETKRKLAAKVFRHTAAYDALISNYLTEQMGEESPETLTVTFEKKQDLRYGENPHQKATFYKAPFAATSSVAYAEQLHGKELSYNNINDADAALSIVKEFTEPAVVAVKHMNPCGVGVGTDIHEAYTRAYEADPVSIFGGIIAANREIDKATAEKLHEIFLEIIIAPSFSKEALEVLQSKKNLRLLTVNIEKATSASKKLTSVQGGLLVQEEDTLSLDESTISIPTKREPSEQEWKDLKLAWKVVKHVKSNAIVLAKDDMTIGVGAGQMNRVGSAKIAITQAGEKAQGSALASDAFFPMPDTLEEAAKAGITAIIQPGGSIRDEDSIKVADTYGIAMVFTGVRHFKH</sequence>
<protein>
    <recommendedName>
        <fullName evidence="1">Bifunctional purine biosynthesis protein PurH</fullName>
    </recommendedName>
    <domain>
        <recommendedName>
            <fullName evidence="1">Phosphoribosylaminoimidazolecarboxamide formyltransferase</fullName>
            <ecNumber evidence="1">2.1.2.3</ecNumber>
        </recommendedName>
        <alternativeName>
            <fullName evidence="1">AICAR transformylase</fullName>
        </alternativeName>
    </domain>
    <domain>
        <recommendedName>
            <fullName evidence="1">IMP cyclohydrolase</fullName>
            <ecNumber evidence="1">3.5.4.10</ecNumber>
        </recommendedName>
        <alternativeName>
            <fullName evidence="1">ATIC</fullName>
        </alternativeName>
        <alternativeName>
            <fullName evidence="1">IMP synthase</fullName>
        </alternativeName>
        <alternativeName>
            <fullName evidence="1">Inosinicase</fullName>
        </alternativeName>
    </domain>
</protein>